<sequence length="195" mass="21846">MSRSESKKNRGGREEVLEQWVNSRKKAEELERDLRKTKKKIKKLEDDNPWLGNIKGILGKKDKDGEGAPPAKRARTDQMEVDSGPRKRPLRGGFTDQERQDHRRRKALENKKKQLAGGGKNLSREEEEELGRLTEEDEKRKRRVAGPPTGGVNPLEGGQRGAPGGGFVPSMQGVPESPFHRHGEGLDARGDRGFP</sequence>
<dbReference type="EMBL" id="M84917">
    <property type="status" value="NOT_ANNOTATED_CDS"/>
    <property type="molecule type" value="Genomic_RNA"/>
</dbReference>
<dbReference type="PIR" id="A40247">
    <property type="entry name" value="SAVLL1"/>
</dbReference>
<dbReference type="SMR" id="P29833"/>
<dbReference type="Proteomes" id="UP000008107">
    <property type="component" value="Genome"/>
</dbReference>
<dbReference type="GO" id="GO:0043657">
    <property type="term" value="C:host cell"/>
    <property type="evidence" value="ECO:0007669"/>
    <property type="project" value="GOC"/>
</dbReference>
<dbReference type="GO" id="GO:0042025">
    <property type="term" value="C:host cell nucleus"/>
    <property type="evidence" value="ECO:0007669"/>
    <property type="project" value="UniProtKB-SubCell"/>
</dbReference>
<dbReference type="GO" id="GO:0044423">
    <property type="term" value="C:virion component"/>
    <property type="evidence" value="ECO:0007669"/>
    <property type="project" value="UniProtKB-KW"/>
</dbReference>
<dbReference type="GO" id="GO:0003723">
    <property type="term" value="F:RNA binding"/>
    <property type="evidence" value="ECO:0007669"/>
    <property type="project" value="UniProtKB-KW"/>
</dbReference>
<dbReference type="GO" id="GO:0046718">
    <property type="term" value="P:symbiont entry into host cell"/>
    <property type="evidence" value="ECO:0007669"/>
    <property type="project" value="UniProtKB-KW"/>
</dbReference>
<dbReference type="GO" id="GO:0075732">
    <property type="term" value="P:viral penetration into host nucleus"/>
    <property type="evidence" value="ECO:0007669"/>
    <property type="project" value="UniProtKB-KW"/>
</dbReference>
<dbReference type="Gene3D" id="4.10.220.40">
    <property type="entry name" value="Delta antigen, N-terminal"/>
    <property type="match status" value="1"/>
</dbReference>
<dbReference type="InterPro" id="IPR027403">
    <property type="entry name" value="Delta_antigen_N"/>
</dbReference>
<dbReference type="InterPro" id="IPR037517">
    <property type="entry name" value="HDAG_dom"/>
</dbReference>
<dbReference type="InterPro" id="IPR002506">
    <property type="entry name" value="HDV_ag"/>
</dbReference>
<dbReference type="Pfam" id="PF01517">
    <property type="entry name" value="HDV_ag"/>
    <property type="match status" value="1"/>
</dbReference>
<dbReference type="SUPFAM" id="SSF58108">
    <property type="entry name" value="Oligomerization domain of hepatitis delta antigen"/>
    <property type="match status" value="1"/>
</dbReference>
<dbReference type="PROSITE" id="PS51838">
    <property type="entry name" value="HDAG"/>
    <property type="match status" value="1"/>
</dbReference>
<proteinExistence type="inferred from homology"/>
<keyword id="KW-0007">Acetylation</keyword>
<keyword id="KW-1048">Host nucleus</keyword>
<keyword id="KW-0945">Host-virus interaction</keyword>
<keyword id="KW-0488">Methylation</keyword>
<keyword id="KW-0597">Phosphoprotein</keyword>
<keyword id="KW-0691">RNA editing</keyword>
<keyword id="KW-0694">RNA-binding</keyword>
<keyword id="KW-1163">Viral penetration into host nucleus</keyword>
<keyword id="KW-0946">Virion</keyword>
<keyword id="KW-1160">Virus entry into host cell</keyword>
<organismHost>
    <name type="scientific">Homo sapiens</name>
    <name type="common">Human</name>
    <dbReference type="NCBI Taxonomy" id="9606"/>
</organismHost>
<comment type="function">
    <text evidence="1">Promotes both transcription and replication of genomic RNA. Following virus entry into host cell, provides nuclear import of HDV RNPs thanks to its nuclear localization signal. May interact with host RNA polymerase II thereby changing its template requirement from DNA to RNA. RNA pol II complex would then acts as an RNA-directed RNA polymerase, and transcribe and replicate HDV genome (By similarity).</text>
</comment>
<comment type="subunit">
    <text evidence="1">Homodimer. Homooctamer. Interacts with host RNA polymerase II complex, and with host NPM1.</text>
</comment>
<comment type="subcellular location">
    <subcellularLocation>
        <location>Virion</location>
    </subcellularLocation>
    <subcellularLocation>
        <location evidence="1">Host nucleus</location>
    </subcellularLocation>
</comment>
<comment type="PTM">
    <text evidence="1">Phosphorylated at serines and threonines by host MAPK1/3, PKR, and CK2.</text>
</comment>
<comment type="PTM">
    <text evidence="1">Acetylation modulates nuclear localization. Neo-synthesized genomic RNA migrates from the nucleus to the cytoplasm, where they interact with S-HDAg, which once acetylated redirect both partners to the nucleus (By similarity).</text>
</comment>
<comment type="PTM">
    <text evidence="1">Methylation plays a role in viral genome replication.</text>
</comment>
<comment type="RNA editing">
    <location>
        <position position="196" evidence="1"/>
    </location>
    <text evidence="1">Partially edited. RNA editing at this position occurs on the antigenomic strand and consists of a conversion of A to G catalyzed by the cellular enzyme ADAR1. The unedited RNA version gives rise to the small delta antigen, which ends with a nonsense codon at position 196. In the edited version, this amber codon is modified to a tryptophan codon and gives rise to the large delta antigen protein (AC P0C6M1). S-HDAg suppresses editing of non-replicating antigenomic RNA, thereby regulating the extent of editing (By similarity).</text>
</comment>
<comment type="miscellaneous">
    <text>This strain belongs to the genotype I found in North America, Europe, Africa, East and West Asia and the South Pacific.</text>
</comment>
<comment type="similarity">
    <text evidence="6">Belongs to the hepatitis delta antigen family.</text>
</comment>
<feature type="chain" id="PRO_0000038135" description="Small delta antigen">
    <location>
        <begin position="1"/>
        <end position="195"/>
    </location>
</feature>
<feature type="domain" description="HDAg" evidence="4">
    <location>
        <begin position="20"/>
        <end position="195"/>
    </location>
</feature>
<feature type="region of interest" description="Dimerization" evidence="3">
    <location>
        <begin position="12"/>
        <end position="60"/>
    </location>
</feature>
<feature type="region of interest" description="Disordered" evidence="5">
    <location>
        <begin position="44"/>
        <end position="195"/>
    </location>
</feature>
<feature type="region of interest" description="RNA-binding" evidence="4">
    <location>
        <begin position="97"/>
        <end position="107"/>
    </location>
</feature>
<feature type="region of interest" description="RNAPII-binding" evidence="4">
    <location>
        <begin position="130"/>
        <end position="195"/>
    </location>
</feature>
<feature type="region of interest" description="RNA-binding" evidence="4">
    <location>
        <begin position="136"/>
        <end position="146"/>
    </location>
</feature>
<feature type="short sequence motif" description="Nuclear localization signal" evidence="2">
    <location>
        <begin position="66"/>
        <end position="75"/>
    </location>
</feature>
<feature type="compositionally biased region" description="Basic and acidic residues" evidence="5">
    <location>
        <begin position="96"/>
        <end position="112"/>
    </location>
</feature>
<feature type="compositionally biased region" description="Basic and acidic residues" evidence="5">
    <location>
        <begin position="130"/>
        <end position="139"/>
    </location>
</feature>
<feature type="compositionally biased region" description="Gly residues" evidence="5">
    <location>
        <begin position="158"/>
        <end position="167"/>
    </location>
</feature>
<feature type="compositionally biased region" description="Basic and acidic residues" evidence="5">
    <location>
        <begin position="178"/>
        <end position="195"/>
    </location>
</feature>
<feature type="modified residue" description="Phosphoserine; by host CK2" evidence="2">
    <location>
        <position position="2"/>
    </location>
</feature>
<feature type="modified residue" description="Omega-N-methylated arginine; by host PRMT1" evidence="2">
    <location>
        <position position="13"/>
    </location>
</feature>
<feature type="modified residue" description="N6-acetyllysine; by host" evidence="2">
    <location>
        <position position="72"/>
    </location>
</feature>
<feature type="modified residue" description="Phosphoserine; by host" evidence="2">
    <location>
        <position position="123"/>
    </location>
</feature>
<feature type="modified residue" description="Phosphoserine; by host MAPK1 and MAPK3" evidence="2">
    <location>
        <position position="177"/>
    </location>
</feature>
<protein>
    <recommendedName>
        <fullName>Small delta antigen</fullName>
        <shortName>S-HDAg</shortName>
    </recommendedName>
    <alternativeName>
        <fullName>p24</fullName>
    </alternativeName>
</protein>
<accession>P29833</accession>
<name>SHDAG_HDVL1</name>
<organism>
    <name type="scientific">Hepatitis delta virus genotype I (isolate Lebanon-1)</name>
    <name type="common">HDV</name>
    <dbReference type="NCBI Taxonomy" id="31763"/>
    <lineage>
        <taxon>Viruses</taxon>
        <taxon>Ribozyviria</taxon>
        <taxon>Kolmioviridae</taxon>
        <taxon>Deltavirus</taxon>
        <taxon>Hepatitis delta virus</taxon>
    </lineage>
</organism>
<evidence type="ECO:0000250" key="1"/>
<evidence type="ECO:0000250" key="2">
    <source>
        <dbReference type="UniProtKB" id="P0C6L3"/>
    </source>
</evidence>
<evidence type="ECO:0000255" key="3"/>
<evidence type="ECO:0000255" key="4">
    <source>
        <dbReference type="PROSITE-ProRule" id="PRU01183"/>
    </source>
</evidence>
<evidence type="ECO:0000256" key="5">
    <source>
        <dbReference type="SAM" id="MobiDB-lite"/>
    </source>
</evidence>
<evidence type="ECO:0000305" key="6"/>
<reference key="1">
    <citation type="journal article" date="1992" name="Virology">
        <title>Evolution of hepatitis delta virus RNA during chronic infection.</title>
        <authorList>
            <person name="Lee C.M."/>
            <person name="Bih F.Y."/>
            <person name="Chao Y.C."/>
            <person name="Govindarajan S."/>
            <person name="Lai M.M.C."/>
        </authorList>
    </citation>
    <scope>NUCLEOTIDE SEQUENCE [GENOMIC RNA]</scope>
</reference>
<reference key="2">
    <citation type="journal article" date="2005" name="Acta Virol.">
        <title>Hepatitis D.</title>
        <authorList>
            <person name="Husa P."/>
            <person name="Linhartova A."/>
            <person name="Nemecek V."/>
            <person name="Husova L."/>
        </authorList>
    </citation>
    <scope>REVIEW</scope>
</reference>
<reference key="3">
    <citation type="journal article" date="2006" name="Curr. Top. Microbiol. Immunol.">
        <title>Post-translational modification of delta antigen of hepatitis D virus.</title>
        <authorList>
            <person name="Huang W.H."/>
            <person name="Chen C.W."/>
            <person name="Wu H.L."/>
            <person name="Chen P.J."/>
        </authorList>
    </citation>
    <scope>REVIEW</scope>
</reference>